<dbReference type="EMBL" id="AM286415">
    <property type="protein sequence ID" value="CAL12758.1"/>
    <property type="molecule type" value="Genomic_DNA"/>
</dbReference>
<dbReference type="RefSeq" id="WP_011816688.1">
    <property type="nucleotide sequence ID" value="NC_008800.1"/>
</dbReference>
<dbReference type="RefSeq" id="YP_001006915.1">
    <property type="nucleotide sequence ID" value="NC_008800.1"/>
</dbReference>
<dbReference type="KEGG" id="yen:YE2724"/>
<dbReference type="PATRIC" id="fig|393305.7.peg.2895"/>
<dbReference type="eggNOG" id="COG1270">
    <property type="taxonomic scope" value="Bacteria"/>
</dbReference>
<dbReference type="HOGENOM" id="CLU_054212_0_0_6"/>
<dbReference type="OrthoDB" id="9811967at2"/>
<dbReference type="UniPathway" id="UPA00148"/>
<dbReference type="Proteomes" id="UP000000642">
    <property type="component" value="Chromosome"/>
</dbReference>
<dbReference type="GO" id="GO:0005886">
    <property type="term" value="C:plasma membrane"/>
    <property type="evidence" value="ECO:0007669"/>
    <property type="project" value="UniProtKB-SubCell"/>
</dbReference>
<dbReference type="GO" id="GO:0015420">
    <property type="term" value="F:ABC-type vitamin B12 transporter activity"/>
    <property type="evidence" value="ECO:0007669"/>
    <property type="project" value="UniProtKB-UniRule"/>
</dbReference>
<dbReference type="GO" id="GO:0048472">
    <property type="term" value="F:threonine-phosphate decarboxylase activity"/>
    <property type="evidence" value="ECO:0007669"/>
    <property type="project" value="InterPro"/>
</dbReference>
<dbReference type="GO" id="GO:0009236">
    <property type="term" value="P:cobalamin biosynthetic process"/>
    <property type="evidence" value="ECO:0007669"/>
    <property type="project" value="UniProtKB-UniRule"/>
</dbReference>
<dbReference type="HAMAP" id="MF_00024">
    <property type="entry name" value="CobD_CbiB"/>
    <property type="match status" value="1"/>
</dbReference>
<dbReference type="InterPro" id="IPR004485">
    <property type="entry name" value="Cobalamin_biosynth_CobD/CbiB"/>
</dbReference>
<dbReference type="NCBIfam" id="TIGR00380">
    <property type="entry name" value="cobal_cbiB"/>
    <property type="match status" value="1"/>
</dbReference>
<dbReference type="PANTHER" id="PTHR34308">
    <property type="entry name" value="COBALAMIN BIOSYNTHESIS PROTEIN CBIB"/>
    <property type="match status" value="1"/>
</dbReference>
<dbReference type="PANTHER" id="PTHR34308:SF1">
    <property type="entry name" value="COBALAMIN BIOSYNTHESIS PROTEIN CBIB"/>
    <property type="match status" value="1"/>
</dbReference>
<dbReference type="Pfam" id="PF03186">
    <property type="entry name" value="CobD_Cbib"/>
    <property type="match status" value="1"/>
</dbReference>
<feature type="chain" id="PRO_1000057222" description="Cobalamin biosynthesis protein CobD">
    <location>
        <begin position="1"/>
        <end position="318"/>
    </location>
</feature>
<feature type="transmembrane region" description="Helical" evidence="1">
    <location>
        <begin position="56"/>
        <end position="76"/>
    </location>
</feature>
<feature type="transmembrane region" description="Helical" evidence="1">
    <location>
        <begin position="78"/>
        <end position="98"/>
    </location>
</feature>
<feature type="transmembrane region" description="Helical" evidence="1">
    <location>
        <begin position="153"/>
        <end position="173"/>
    </location>
</feature>
<feature type="transmembrane region" description="Helical" evidence="1">
    <location>
        <begin position="204"/>
        <end position="224"/>
    </location>
</feature>
<feature type="transmembrane region" description="Helical" evidence="1">
    <location>
        <begin position="298"/>
        <end position="318"/>
    </location>
</feature>
<proteinExistence type="inferred from homology"/>
<protein>
    <recommendedName>
        <fullName evidence="1">Cobalamin biosynthesis protein CobD</fullName>
    </recommendedName>
</protein>
<comment type="function">
    <text evidence="1">Converts cobyric acid to cobinamide by the addition of aminopropanol on the F carboxylic group.</text>
</comment>
<comment type="pathway">
    <text evidence="1">Cofactor biosynthesis; adenosylcobalamin biosynthesis.</text>
</comment>
<comment type="subcellular location">
    <subcellularLocation>
        <location evidence="1">Cell membrane</location>
        <topology evidence="1">Multi-pass membrane protein</topology>
    </subcellularLocation>
</comment>
<comment type="similarity">
    <text evidence="1">Belongs to the CobD/CbiB family.</text>
</comment>
<accession>A1JTR6</accession>
<organism>
    <name type="scientific">Yersinia enterocolitica serotype O:8 / biotype 1B (strain NCTC 13174 / 8081)</name>
    <dbReference type="NCBI Taxonomy" id="393305"/>
    <lineage>
        <taxon>Bacteria</taxon>
        <taxon>Pseudomonadati</taxon>
        <taxon>Pseudomonadota</taxon>
        <taxon>Gammaproteobacteria</taxon>
        <taxon>Enterobacterales</taxon>
        <taxon>Yersiniaceae</taxon>
        <taxon>Yersinia</taxon>
    </lineage>
</organism>
<evidence type="ECO:0000255" key="1">
    <source>
        <dbReference type="HAMAP-Rule" id="MF_00024"/>
    </source>
</evidence>
<name>COBD_YERE8</name>
<reference key="1">
    <citation type="journal article" date="2006" name="PLoS Genet.">
        <title>The complete genome sequence and comparative genome analysis of the high pathogenicity Yersinia enterocolitica strain 8081.</title>
        <authorList>
            <person name="Thomson N.R."/>
            <person name="Howard S."/>
            <person name="Wren B.W."/>
            <person name="Holden M.T.G."/>
            <person name="Crossman L."/>
            <person name="Challis G.L."/>
            <person name="Churcher C."/>
            <person name="Mungall K."/>
            <person name="Brooks K."/>
            <person name="Chillingworth T."/>
            <person name="Feltwell T."/>
            <person name="Abdellah Z."/>
            <person name="Hauser H."/>
            <person name="Jagels K."/>
            <person name="Maddison M."/>
            <person name="Moule S."/>
            <person name="Sanders M."/>
            <person name="Whitehead S."/>
            <person name="Quail M.A."/>
            <person name="Dougan G."/>
            <person name="Parkhill J."/>
            <person name="Prentice M.B."/>
        </authorList>
    </citation>
    <scope>NUCLEOTIDE SEQUENCE [LARGE SCALE GENOMIC DNA]</scope>
    <source>
        <strain>NCTC 13174 / 8081</strain>
    </source>
</reference>
<keyword id="KW-1003">Cell membrane</keyword>
<keyword id="KW-0169">Cobalamin biosynthesis</keyword>
<keyword id="KW-0472">Membrane</keyword>
<keyword id="KW-0812">Transmembrane</keyword>
<keyword id="KW-1133">Transmembrane helix</keyword>
<sequence length="318" mass="35793">MTLSAWFVAFLLDHWLGDPPRWPHPVRWMGNLITLLQRAIRTLCHSEWALKWGGAVLWLLVVGITWLVSWGFLWLMTEINPWLGWLAQVWMIYTLLAGRCLSDAALAVFDALQHGTLAQSREKLSWIVGRDTSQLEKPQITRAVVETVAENSVDGVIAPLFFLMLGGAPLAMAYKAVNTLDSMVGYKTPKYRAIGYMSARMDDLANWLPARLSWVLLSAAAWLIQADYRQALRIGWRDRYQHSSPNCAWSEATVAGALGIRLGGPNDYCGERVEKPWIGDERREVALSDIPRSIHLMMMASLLALLLFALTHLLLVGI</sequence>
<gene>
    <name evidence="1" type="primary">cobD</name>
    <name type="ordered locus">YE2724</name>
</gene>